<organism>
    <name type="scientific">Enterobacteria phage RB27</name>
    <name type="common">Bacteriophage RB27</name>
    <dbReference type="NCBI Taxonomy" id="69609"/>
    <lineage>
        <taxon>Viruses</taxon>
        <taxon>Duplodnaviria</taxon>
        <taxon>Heunggongvirae</taxon>
        <taxon>Uroviricota</taxon>
        <taxon>Caudoviricetes</taxon>
        <taxon>Straboviridae</taxon>
        <taxon>Tevenvirinae</taxon>
        <taxon>Tequatrovirus</taxon>
        <taxon>Tequatrovirus RB27</taxon>
    </lineage>
</organism>
<gene>
    <name type="primary">32</name>
    <name type="synonym">ssb</name>
</gene>
<name>VHED_BPR27</name>
<dbReference type="EMBL" id="AF033330">
    <property type="protein sequence ID" value="AAB87495.1"/>
    <property type="molecule type" value="Genomic_DNA"/>
</dbReference>
<dbReference type="SMR" id="O21957"/>
<dbReference type="GO" id="GO:0003677">
    <property type="term" value="F:DNA binding"/>
    <property type="evidence" value="ECO:0007669"/>
    <property type="project" value="UniProtKB-KW"/>
</dbReference>
<dbReference type="GO" id="GO:0008270">
    <property type="term" value="F:zinc ion binding"/>
    <property type="evidence" value="ECO:0007669"/>
    <property type="project" value="UniProtKB-KW"/>
</dbReference>
<dbReference type="GO" id="GO:0006310">
    <property type="term" value="P:DNA recombination"/>
    <property type="evidence" value="ECO:0007669"/>
    <property type="project" value="UniProtKB-KW"/>
</dbReference>
<dbReference type="GO" id="GO:0006281">
    <property type="term" value="P:DNA repair"/>
    <property type="evidence" value="ECO:0007669"/>
    <property type="project" value="UniProtKB-KW"/>
</dbReference>
<dbReference type="GO" id="GO:0006260">
    <property type="term" value="P:DNA replication"/>
    <property type="evidence" value="ECO:0007669"/>
    <property type="project" value="UniProtKB-KW"/>
</dbReference>
<dbReference type="Gene3D" id="3.90.198.10">
    <property type="entry name" value="Replication Fork Single-Stranded Dna Binding Protein"/>
    <property type="match status" value="1"/>
</dbReference>
<dbReference type="InterPro" id="IPR012340">
    <property type="entry name" value="NA-bd_OB-fold"/>
</dbReference>
<dbReference type="InterPro" id="IPR044947">
    <property type="entry name" value="Phage_T4_Gp32_ssDNA-bd_sf"/>
</dbReference>
<dbReference type="SUPFAM" id="SSF50249">
    <property type="entry name" value="Nucleic acid-binding proteins"/>
    <property type="match status" value="1"/>
</dbReference>
<feature type="chain" id="PRO_0000165060" description="Single-stranded DNA-binding protein">
    <location>
        <begin position="1"/>
        <end position="50" status="greater than"/>
    </location>
</feature>
<feature type="non-terminal residue">
    <location>
        <position position="50"/>
    </location>
</feature>
<proteinExistence type="inferred from homology"/>
<reference key="1">
    <citation type="submission" date="1997-11" db="EMBL/GenBank/DDBJ databases">
        <authorList>
            <person name="Theimer C.A."/>
            <person name="Krisch H.M."/>
            <person name="Giedroc D.P."/>
        </authorList>
    </citation>
    <scope>NUCLEOTIDE SEQUENCE [GENOMIC DNA]</scope>
</reference>
<evidence type="ECO:0000250" key="1"/>
<organismHost>
    <name type="scientific">Escherichia coli</name>
    <dbReference type="NCBI Taxonomy" id="562"/>
</organismHost>
<protein>
    <recommendedName>
        <fullName>Single-stranded DNA-binding protein</fullName>
    </recommendedName>
    <alternativeName>
        <fullName>Gp32</fullName>
    </alternativeName>
    <alternativeName>
        <fullName>Helix-destabilizing protein</fullName>
    </alternativeName>
</protein>
<comment type="function">
    <text>Binds preferentially to single-stranded DNA and therefore, destabilizes double-stranded DNA. It is involved in DNA replication, repair and recombination. Binds ss-DNA as the replication fork advances and stimulates the replisome processivity and accuracy.</text>
</comment>
<comment type="subunit">
    <text evidence="1">Homodimer in the absence of DNA, monomer when binding DNA.</text>
</comment>
<comment type="miscellaneous">
    <text evidence="1">Interacts with the polymerase and the uvsX and uvsY proteins.</text>
</comment>
<sequence length="50" mass="5439">MFKRKSTAELVAQMAKLAGNKGGFSSEDKGEWKLKLDNAGNGQAVIRFLP</sequence>
<accession>O21957</accession>
<keyword id="KW-0227">DNA damage</keyword>
<keyword id="KW-0233">DNA recombination</keyword>
<keyword id="KW-0234">DNA repair</keyword>
<keyword id="KW-0235">DNA replication</keyword>
<keyword id="KW-0238">DNA-binding</keyword>
<keyword id="KW-0479">Metal-binding</keyword>
<keyword id="KW-0862">Zinc</keyword>
<keyword id="KW-0863">Zinc-finger</keyword>